<evidence type="ECO:0000255" key="1">
    <source>
        <dbReference type="HAMAP-Rule" id="MF_00095"/>
    </source>
</evidence>
<evidence type="ECO:0000305" key="2"/>
<proteinExistence type="inferred from homology"/>
<protein>
    <recommendedName>
        <fullName evidence="1">Sugar fermentation stimulation protein homolog</fullName>
    </recommendedName>
</protein>
<reference key="1">
    <citation type="journal article" date="2009" name="Environ. Microbiol.">
        <title>Contribution of mobile genetic elements to Desulfovibrio vulgaris genome plasticity.</title>
        <authorList>
            <person name="Walker C.B."/>
            <person name="Stolyar S."/>
            <person name="Chivian D."/>
            <person name="Pinel N."/>
            <person name="Gabster J.A."/>
            <person name="Dehal P.S."/>
            <person name="He Z."/>
            <person name="Yang Z.K."/>
            <person name="Yen H.C."/>
            <person name="Zhou J."/>
            <person name="Wall J.D."/>
            <person name="Hazen T.C."/>
            <person name="Arkin A.P."/>
            <person name="Stahl D.A."/>
        </authorList>
    </citation>
    <scope>NUCLEOTIDE SEQUENCE [LARGE SCALE GENOMIC DNA]</scope>
    <source>
        <strain>DP4</strain>
    </source>
</reference>
<feature type="chain" id="PRO_0000340140" description="Sugar fermentation stimulation protein homolog">
    <location>
        <begin position="1"/>
        <end position="242"/>
    </location>
</feature>
<dbReference type="EMBL" id="CP000527">
    <property type="protein sequence ID" value="ABM27188.1"/>
    <property type="status" value="ALT_INIT"/>
    <property type="molecule type" value="Genomic_DNA"/>
</dbReference>
<dbReference type="RefSeq" id="WP_081428954.1">
    <property type="nucleotide sequence ID" value="NC_008751.1"/>
</dbReference>
<dbReference type="SMR" id="A1V9S2"/>
<dbReference type="KEGG" id="dvl:Dvul_0164"/>
<dbReference type="HOGENOM" id="CLU_052299_2_0_7"/>
<dbReference type="Proteomes" id="UP000009173">
    <property type="component" value="Chromosome"/>
</dbReference>
<dbReference type="GO" id="GO:0003677">
    <property type="term" value="F:DNA binding"/>
    <property type="evidence" value="ECO:0007669"/>
    <property type="project" value="InterPro"/>
</dbReference>
<dbReference type="CDD" id="cd22359">
    <property type="entry name" value="SfsA-like_bacterial"/>
    <property type="match status" value="1"/>
</dbReference>
<dbReference type="Gene3D" id="2.40.50.580">
    <property type="match status" value="1"/>
</dbReference>
<dbReference type="Gene3D" id="3.40.1350.60">
    <property type="match status" value="1"/>
</dbReference>
<dbReference type="HAMAP" id="MF_00095">
    <property type="entry name" value="SfsA"/>
    <property type="match status" value="1"/>
</dbReference>
<dbReference type="InterPro" id="IPR005224">
    <property type="entry name" value="SfsA"/>
</dbReference>
<dbReference type="InterPro" id="IPR040452">
    <property type="entry name" value="SfsA_C"/>
</dbReference>
<dbReference type="InterPro" id="IPR041465">
    <property type="entry name" value="SfsA_N"/>
</dbReference>
<dbReference type="NCBIfam" id="TIGR00230">
    <property type="entry name" value="sfsA"/>
    <property type="match status" value="1"/>
</dbReference>
<dbReference type="PANTHER" id="PTHR30545">
    <property type="entry name" value="SUGAR FERMENTATION STIMULATION PROTEIN A"/>
    <property type="match status" value="1"/>
</dbReference>
<dbReference type="PANTHER" id="PTHR30545:SF2">
    <property type="entry name" value="SUGAR FERMENTATION STIMULATION PROTEIN A"/>
    <property type="match status" value="1"/>
</dbReference>
<dbReference type="Pfam" id="PF03749">
    <property type="entry name" value="SfsA"/>
    <property type="match status" value="1"/>
</dbReference>
<dbReference type="Pfam" id="PF17746">
    <property type="entry name" value="SfsA_N"/>
    <property type="match status" value="1"/>
</dbReference>
<name>SFSA_NITV4</name>
<accession>A1V9S2</accession>
<sequence length="242" mass="26821">MRKILLPYPAGCATGTFVRRVKRFSVEMTRDGESVWVHSNNSGSMLGLLRPGATMLASPAANPDRKLAWTHEAMRCHGDGPQGFWVGVNTSVPNRMVEAAFHAGRLPWAQGYDTFRRERKRGDSRLDARLDGPGLPTLWVECKNVTMVEDDVACFPDAVTERGSKHLREMMDIVSRGERAAMFYLVQRPDGVCFGPADVIDPQYAALFWEAVDAGVEMHPHRGIVSPAGIDLGEVLPLTRCR</sequence>
<organism>
    <name type="scientific">Nitratidesulfovibrio vulgaris (strain DP4)</name>
    <name type="common">Desulfovibrio vulgaris</name>
    <dbReference type="NCBI Taxonomy" id="391774"/>
    <lineage>
        <taxon>Bacteria</taxon>
        <taxon>Pseudomonadati</taxon>
        <taxon>Thermodesulfobacteriota</taxon>
        <taxon>Desulfovibrionia</taxon>
        <taxon>Desulfovibrionales</taxon>
        <taxon>Desulfovibrionaceae</taxon>
        <taxon>Nitratidesulfovibrio</taxon>
    </lineage>
</organism>
<comment type="similarity">
    <text evidence="1">Belongs to the SfsA family.</text>
</comment>
<comment type="sequence caution" evidence="2">
    <conflict type="erroneous initiation">
        <sequence resource="EMBL-CDS" id="ABM27188"/>
    </conflict>
</comment>
<gene>
    <name evidence="1" type="primary">sfsA</name>
    <name type="ordered locus">Dvul_0164</name>
</gene>